<name>LAMB1_YERPP</name>
<proteinExistence type="inferred from homology"/>
<keyword id="KW-0998">Cell outer membrane</keyword>
<keyword id="KW-0406">Ion transport</keyword>
<keyword id="KW-0472">Membrane</keyword>
<keyword id="KW-0626">Porin</keyword>
<keyword id="KW-0732">Signal</keyword>
<keyword id="KW-0762">Sugar transport</keyword>
<keyword id="KW-0812">Transmembrane</keyword>
<keyword id="KW-1134">Transmembrane beta strand</keyword>
<keyword id="KW-0813">Transport</keyword>
<dbReference type="EMBL" id="CP000668">
    <property type="protein sequence ID" value="ABP38608.1"/>
    <property type="molecule type" value="Genomic_DNA"/>
</dbReference>
<dbReference type="RefSeq" id="WP_002212092.1">
    <property type="nucleotide sequence ID" value="NZ_CP009715.1"/>
</dbReference>
<dbReference type="SMR" id="A4TH46"/>
<dbReference type="KEGG" id="ypp:YPDSF_0189"/>
<dbReference type="PATRIC" id="fig|386656.14.peg.1477"/>
<dbReference type="GO" id="GO:0009279">
    <property type="term" value="C:cell outer membrane"/>
    <property type="evidence" value="ECO:0007669"/>
    <property type="project" value="UniProtKB-SubCell"/>
</dbReference>
<dbReference type="GO" id="GO:0046930">
    <property type="term" value="C:pore complex"/>
    <property type="evidence" value="ECO:0007669"/>
    <property type="project" value="UniProtKB-KW"/>
</dbReference>
<dbReference type="GO" id="GO:0042958">
    <property type="term" value="F:maltodextrin transmembrane transporter activity"/>
    <property type="evidence" value="ECO:0007669"/>
    <property type="project" value="InterPro"/>
</dbReference>
<dbReference type="GO" id="GO:0015481">
    <property type="term" value="F:maltose transporting porin activity"/>
    <property type="evidence" value="ECO:0007669"/>
    <property type="project" value="InterPro"/>
</dbReference>
<dbReference type="GO" id="GO:0006811">
    <property type="term" value="P:monoatomic ion transport"/>
    <property type="evidence" value="ECO:0007669"/>
    <property type="project" value="UniProtKB-KW"/>
</dbReference>
<dbReference type="CDD" id="cd01346">
    <property type="entry name" value="Maltoporin-like"/>
    <property type="match status" value="1"/>
</dbReference>
<dbReference type="FunFam" id="2.40.170.10:FF:000001">
    <property type="entry name" value="Maltoporin"/>
    <property type="match status" value="1"/>
</dbReference>
<dbReference type="Gene3D" id="2.40.170.10">
    <property type="entry name" value="Porin, LamB type"/>
    <property type="match status" value="1"/>
</dbReference>
<dbReference type="HAMAP" id="MF_01301">
    <property type="entry name" value="LamB"/>
    <property type="match status" value="1"/>
</dbReference>
<dbReference type="InterPro" id="IPR050286">
    <property type="entry name" value="G_neg_Bact_CarbUptk_Porin"/>
</dbReference>
<dbReference type="InterPro" id="IPR023738">
    <property type="entry name" value="Maltoporin"/>
</dbReference>
<dbReference type="InterPro" id="IPR003192">
    <property type="entry name" value="Porin_LamB"/>
</dbReference>
<dbReference type="InterPro" id="IPR036998">
    <property type="entry name" value="Porin_LamB_sf"/>
</dbReference>
<dbReference type="NCBIfam" id="NF006860">
    <property type="entry name" value="PRK09360.1"/>
    <property type="match status" value="1"/>
</dbReference>
<dbReference type="PANTHER" id="PTHR38762">
    <property type="entry name" value="CRYPTIC OUTER MEMBRANE PORIN BGLH-RELATED"/>
    <property type="match status" value="1"/>
</dbReference>
<dbReference type="PANTHER" id="PTHR38762:SF1">
    <property type="entry name" value="CRYPTIC OUTER MEMBRANE PORIN BGLH-RELATED"/>
    <property type="match status" value="1"/>
</dbReference>
<dbReference type="Pfam" id="PF02264">
    <property type="entry name" value="LamB"/>
    <property type="match status" value="1"/>
</dbReference>
<dbReference type="SUPFAM" id="SSF56935">
    <property type="entry name" value="Porins"/>
    <property type="match status" value="1"/>
</dbReference>
<sequence>MITLRKLPIALAVAAGVLSTQAMAVDFHGYARSGIGWTASGGEQQCFQTTGAQSKYRLGNECETYAELKLGQELWKEGDKSFYLDTNVAYSVSQRDDWESTDPAFREANVQGKNLIESLPGSTIWAGKRFYQRHDVHMIDFYYWDISGPGAGLETIDLGFGKLSVAATRNSESGGSSAWIDNQRENAKYTINNVYDVRLAGLETNPGGSLELGVDYGRADTQEGYSLAPNASKDGVMLTAEHTQSLMGGFNKFVVQYATDSMTSYNTGHSQGTSVNNNGHLLRVIDHGAINLAEKWDMMYVALYQDIDLDNNNGNTWYSVGVRPMYKWTPIMSTLLEAGYDNVKSQHTGERNGQYKLTLAQQWQAGDSIWSRPAIRVFATYANWDEKWGYSDTTGVAQDGTIGTNSRGKNNEVTFGAQFEAWW</sequence>
<reference key="1">
    <citation type="submission" date="2007-02" db="EMBL/GenBank/DDBJ databases">
        <title>Complete sequence of chromosome of Yersinia pestis Pestoides F.</title>
        <authorList>
            <consortium name="US DOE Joint Genome Institute"/>
            <person name="Copeland A."/>
            <person name="Lucas S."/>
            <person name="Lapidus A."/>
            <person name="Barry K."/>
            <person name="Detter J.C."/>
            <person name="Glavina del Rio T."/>
            <person name="Hammon N."/>
            <person name="Israni S."/>
            <person name="Dalin E."/>
            <person name="Tice H."/>
            <person name="Pitluck S."/>
            <person name="Di Bartolo G."/>
            <person name="Chain P."/>
            <person name="Malfatti S."/>
            <person name="Shin M."/>
            <person name="Vergez L."/>
            <person name="Schmutz J."/>
            <person name="Larimer F."/>
            <person name="Land M."/>
            <person name="Hauser L."/>
            <person name="Worsham P."/>
            <person name="Chu M."/>
            <person name="Bearden S."/>
            <person name="Garcia E."/>
            <person name="Richardson P."/>
        </authorList>
    </citation>
    <scope>NUCLEOTIDE SEQUENCE [LARGE SCALE GENOMIC DNA]</scope>
    <source>
        <strain>Pestoides F</strain>
    </source>
</reference>
<organism>
    <name type="scientific">Yersinia pestis (strain Pestoides F)</name>
    <dbReference type="NCBI Taxonomy" id="386656"/>
    <lineage>
        <taxon>Bacteria</taxon>
        <taxon>Pseudomonadati</taxon>
        <taxon>Pseudomonadota</taxon>
        <taxon>Gammaproteobacteria</taxon>
        <taxon>Enterobacterales</taxon>
        <taxon>Yersiniaceae</taxon>
        <taxon>Yersinia</taxon>
    </lineage>
</organism>
<protein>
    <recommendedName>
        <fullName evidence="1">Maltoporin 1</fullName>
    </recommendedName>
    <alternativeName>
        <fullName evidence="1">Maltose-inducible porin 1</fullName>
    </alternativeName>
</protein>
<comment type="function">
    <text evidence="1">Involved in the transport of maltose and maltodextrins.</text>
</comment>
<comment type="catalytic activity">
    <reaction evidence="1">
        <text>beta-maltose(in) = beta-maltose(out)</text>
        <dbReference type="Rhea" id="RHEA:29731"/>
        <dbReference type="ChEBI" id="CHEBI:18147"/>
    </reaction>
</comment>
<comment type="subunit">
    <text evidence="1">Homotrimer formed of three 18-stranded antiparallel beta-barrels, containing three independent channels.</text>
</comment>
<comment type="subcellular location">
    <subcellularLocation>
        <location evidence="1">Cell outer membrane</location>
        <topology evidence="1">Multi-pass membrane protein</topology>
    </subcellularLocation>
</comment>
<comment type="induction">
    <text evidence="1">By maltose.</text>
</comment>
<comment type="similarity">
    <text evidence="1">Belongs to the porin LamB (TC 1.B.3) family.</text>
</comment>
<feature type="signal peptide" evidence="1">
    <location>
        <begin position="1"/>
        <end position="24"/>
    </location>
</feature>
<feature type="chain" id="PRO_5000236502" description="Maltoporin 1">
    <location>
        <begin position="25"/>
        <end position="423"/>
    </location>
</feature>
<feature type="site" description="Greasy slide, important in sugar transport" evidence="1">
    <location>
        <position position="30"/>
    </location>
</feature>
<feature type="site" description="Greasy slide, important in sugar transport" evidence="1">
    <location>
        <position position="65"/>
    </location>
</feature>
<feature type="site" description="Greasy slide, important in sugar transport" evidence="1">
    <location>
        <position position="98"/>
    </location>
</feature>
<feature type="site" description="Important in sugar transport" evidence="1">
    <location>
        <position position="142"/>
    </location>
</feature>
<feature type="site" description="Greasy slide, important in sugar transport" evidence="1">
    <location>
        <position position="250"/>
    </location>
</feature>
<feature type="site" description="Greasy slide, important in sugar transport" evidence="1">
    <location>
        <position position="370"/>
    </location>
</feature>
<feature type="site" description="Greasy slide, important in sugar transport" evidence="1">
    <location>
        <position position="422"/>
    </location>
</feature>
<accession>A4TH46</accession>
<evidence type="ECO:0000255" key="1">
    <source>
        <dbReference type="HAMAP-Rule" id="MF_01301"/>
    </source>
</evidence>
<gene>
    <name evidence="1" type="primary">lamB1</name>
    <name type="ordered locus">YPDSF_0189</name>
</gene>